<feature type="chain" id="PRO_1000045055" description="Probable Fe(2+)-trafficking protein">
    <location>
        <begin position="1"/>
        <end position="90"/>
    </location>
</feature>
<proteinExistence type="inferred from homology"/>
<gene>
    <name type="ordered locus">Pmen_4260</name>
</gene>
<name>FETP_ECTM1</name>
<protein>
    <recommendedName>
        <fullName evidence="1">Probable Fe(2+)-trafficking protein</fullName>
    </recommendedName>
</protein>
<comment type="function">
    <text evidence="1">Could be a mediator in iron transactions between iron acquisition and iron-requiring processes, such as synthesis and/or repair of Fe-S clusters in biosynthetic enzymes.</text>
</comment>
<comment type="similarity">
    <text evidence="1">Belongs to the Fe(2+)-trafficking protein family.</text>
</comment>
<keyword id="KW-0408">Iron</keyword>
<evidence type="ECO:0000255" key="1">
    <source>
        <dbReference type="HAMAP-Rule" id="MF_00686"/>
    </source>
</evidence>
<dbReference type="EMBL" id="CP000680">
    <property type="protein sequence ID" value="ABP87007.1"/>
    <property type="molecule type" value="Genomic_DNA"/>
</dbReference>
<dbReference type="SMR" id="A4Y091"/>
<dbReference type="STRING" id="399739.Pmen_4260"/>
<dbReference type="KEGG" id="pmy:Pmen_4260"/>
<dbReference type="eggNOG" id="COG2924">
    <property type="taxonomic scope" value="Bacteria"/>
</dbReference>
<dbReference type="HOGENOM" id="CLU_170994_0_0_6"/>
<dbReference type="OrthoDB" id="9804318at2"/>
<dbReference type="GO" id="GO:0005829">
    <property type="term" value="C:cytosol"/>
    <property type="evidence" value="ECO:0007669"/>
    <property type="project" value="TreeGrafter"/>
</dbReference>
<dbReference type="GO" id="GO:0005506">
    <property type="term" value="F:iron ion binding"/>
    <property type="evidence" value="ECO:0007669"/>
    <property type="project" value="UniProtKB-UniRule"/>
</dbReference>
<dbReference type="GO" id="GO:0034599">
    <property type="term" value="P:cellular response to oxidative stress"/>
    <property type="evidence" value="ECO:0007669"/>
    <property type="project" value="TreeGrafter"/>
</dbReference>
<dbReference type="FunFam" id="1.10.3880.10:FF:000001">
    <property type="entry name" value="Probable Fe(2+)-trafficking protein"/>
    <property type="match status" value="1"/>
</dbReference>
<dbReference type="Gene3D" id="1.10.3880.10">
    <property type="entry name" value="Fe(II) trafficking protein YggX"/>
    <property type="match status" value="1"/>
</dbReference>
<dbReference type="HAMAP" id="MF_00686">
    <property type="entry name" value="Fe_traffic_YggX"/>
    <property type="match status" value="1"/>
</dbReference>
<dbReference type="InterPro" id="IPR007457">
    <property type="entry name" value="Fe_traffick_prot_YggX"/>
</dbReference>
<dbReference type="InterPro" id="IPR036766">
    <property type="entry name" value="Fe_traffick_prot_YggX_sf"/>
</dbReference>
<dbReference type="NCBIfam" id="NF003817">
    <property type="entry name" value="PRK05408.1"/>
    <property type="match status" value="1"/>
</dbReference>
<dbReference type="PANTHER" id="PTHR36965">
    <property type="entry name" value="FE(2+)-TRAFFICKING PROTEIN-RELATED"/>
    <property type="match status" value="1"/>
</dbReference>
<dbReference type="PANTHER" id="PTHR36965:SF1">
    <property type="entry name" value="FE(2+)-TRAFFICKING PROTEIN-RELATED"/>
    <property type="match status" value="1"/>
</dbReference>
<dbReference type="Pfam" id="PF04362">
    <property type="entry name" value="Iron_traffic"/>
    <property type="match status" value="1"/>
</dbReference>
<dbReference type="PIRSF" id="PIRSF029827">
    <property type="entry name" value="Fe_traffic_YggX"/>
    <property type="match status" value="1"/>
</dbReference>
<dbReference type="SUPFAM" id="SSF111148">
    <property type="entry name" value="YggX-like"/>
    <property type="match status" value="1"/>
</dbReference>
<reference key="1">
    <citation type="submission" date="2007-04" db="EMBL/GenBank/DDBJ databases">
        <title>Complete sequence of Pseudomonas mendocina ymp.</title>
        <authorList>
            <consortium name="US DOE Joint Genome Institute"/>
            <person name="Copeland A."/>
            <person name="Lucas S."/>
            <person name="Lapidus A."/>
            <person name="Barry K."/>
            <person name="Glavina del Rio T."/>
            <person name="Dalin E."/>
            <person name="Tice H."/>
            <person name="Pitluck S."/>
            <person name="Kiss H."/>
            <person name="Brettin T."/>
            <person name="Detter J.C."/>
            <person name="Bruce D."/>
            <person name="Han C."/>
            <person name="Schmutz J."/>
            <person name="Larimer F."/>
            <person name="Land M."/>
            <person name="Hauser L."/>
            <person name="Kyrpides N."/>
            <person name="Mikhailova N."/>
            <person name="Hersman L."/>
            <person name="Dubois J."/>
            <person name="Maurice P."/>
            <person name="Richardson P."/>
        </authorList>
    </citation>
    <scope>NUCLEOTIDE SEQUENCE [LARGE SCALE GENOMIC DNA]</scope>
    <source>
        <strain>ymp</strain>
    </source>
</reference>
<organism>
    <name type="scientific">Ectopseudomonas mendocina (strain ymp)</name>
    <name type="common">Pseudomonas mendocina</name>
    <dbReference type="NCBI Taxonomy" id="399739"/>
    <lineage>
        <taxon>Bacteria</taxon>
        <taxon>Pseudomonadati</taxon>
        <taxon>Pseudomonadota</taxon>
        <taxon>Gammaproteobacteria</taxon>
        <taxon>Pseudomonadales</taxon>
        <taxon>Pseudomonadaceae</taxon>
        <taxon>Ectopseudomonas</taxon>
    </lineage>
</organism>
<accession>A4Y091</accession>
<sequence length="90" mass="10583">MTRTVLCRKYKQELPGLDRAPYPGPKGEDIFANVSKQAWDEWQKHQTMLINERRLNMMNAEDRKFLQTEMDKFLSGEEYAQAEGYVPPSE</sequence>